<feature type="chain" id="PRO_0000357080" description="Methylthioribulose-1-phosphate dehydratase">
    <location>
        <begin position="1"/>
        <end position="211"/>
    </location>
</feature>
<feature type="binding site" evidence="1">
    <location>
        <position position="97"/>
    </location>
    <ligand>
        <name>Zn(2+)</name>
        <dbReference type="ChEBI" id="CHEBI:29105"/>
    </ligand>
</feature>
<feature type="binding site" evidence="1">
    <location>
        <position position="99"/>
    </location>
    <ligand>
        <name>Zn(2+)</name>
        <dbReference type="ChEBI" id="CHEBI:29105"/>
    </ligand>
</feature>
<organism>
    <name type="scientific">Geobacillus thermodenitrificans (strain NG80-2)</name>
    <dbReference type="NCBI Taxonomy" id="420246"/>
    <lineage>
        <taxon>Bacteria</taxon>
        <taxon>Bacillati</taxon>
        <taxon>Bacillota</taxon>
        <taxon>Bacilli</taxon>
        <taxon>Bacillales</taxon>
        <taxon>Anoxybacillaceae</taxon>
        <taxon>Geobacillus</taxon>
    </lineage>
</organism>
<gene>
    <name evidence="1" type="primary">mtnB</name>
    <name type="ordered locus">GTNG_0843</name>
</gene>
<protein>
    <recommendedName>
        <fullName evidence="1">Methylthioribulose-1-phosphate dehydratase</fullName>
        <shortName evidence="1">MTRu-1-P dehydratase</shortName>
        <ecNumber evidence="1">4.2.1.109</ecNumber>
    </recommendedName>
</protein>
<proteinExistence type="inferred from homology"/>
<keyword id="KW-0028">Amino-acid biosynthesis</keyword>
<keyword id="KW-0456">Lyase</keyword>
<keyword id="KW-0479">Metal-binding</keyword>
<keyword id="KW-0486">Methionine biosynthesis</keyword>
<keyword id="KW-0862">Zinc</keyword>
<accession>A4ILL7</accession>
<sequence>MSIMLKKWNELAEVKAELAARDWFFATSGNLSLKVTDAPLTFLVTASGKDKRKQTSEDFLLIDADGKPVEDTHLKPSAETLLHVEVYRRTNAGCVLHVHTVDNNIISDVYAQNREAVFSGQEIIKAFGIWEENAEVRIPIIDNYADIPTLANEFAKHIDGDTGAVLIQNHGITVWGRDAFEAKKHLEAWEFLFSWQVKRLLLQRAAVPLVD</sequence>
<evidence type="ECO:0000255" key="1">
    <source>
        <dbReference type="HAMAP-Rule" id="MF_01677"/>
    </source>
</evidence>
<dbReference type="EC" id="4.2.1.109" evidence="1"/>
<dbReference type="EMBL" id="CP000557">
    <property type="protein sequence ID" value="ABO66221.1"/>
    <property type="molecule type" value="Genomic_DNA"/>
</dbReference>
<dbReference type="RefSeq" id="WP_008878835.1">
    <property type="nucleotide sequence ID" value="NC_009328.1"/>
</dbReference>
<dbReference type="SMR" id="A4ILL7"/>
<dbReference type="GeneID" id="87621561"/>
<dbReference type="KEGG" id="gtn:GTNG_0843"/>
<dbReference type="eggNOG" id="COG0235">
    <property type="taxonomic scope" value="Bacteria"/>
</dbReference>
<dbReference type="HOGENOM" id="CLU_006033_4_1_9"/>
<dbReference type="UniPathway" id="UPA00904">
    <property type="reaction ID" value="UER00875"/>
</dbReference>
<dbReference type="Proteomes" id="UP000001578">
    <property type="component" value="Chromosome"/>
</dbReference>
<dbReference type="GO" id="GO:0005737">
    <property type="term" value="C:cytoplasm"/>
    <property type="evidence" value="ECO:0007669"/>
    <property type="project" value="InterPro"/>
</dbReference>
<dbReference type="GO" id="GO:0046570">
    <property type="term" value="F:methylthioribulose 1-phosphate dehydratase activity"/>
    <property type="evidence" value="ECO:0007669"/>
    <property type="project" value="UniProtKB-UniRule"/>
</dbReference>
<dbReference type="GO" id="GO:0008270">
    <property type="term" value="F:zinc ion binding"/>
    <property type="evidence" value="ECO:0007669"/>
    <property type="project" value="UniProtKB-UniRule"/>
</dbReference>
<dbReference type="GO" id="GO:0019509">
    <property type="term" value="P:L-methionine salvage from methylthioadenosine"/>
    <property type="evidence" value="ECO:0007669"/>
    <property type="project" value="UniProtKB-UniRule"/>
</dbReference>
<dbReference type="Gene3D" id="3.40.225.10">
    <property type="entry name" value="Class II aldolase/adducin N-terminal domain"/>
    <property type="match status" value="1"/>
</dbReference>
<dbReference type="HAMAP" id="MF_01677">
    <property type="entry name" value="Salvage_MtnB"/>
    <property type="match status" value="1"/>
</dbReference>
<dbReference type="InterPro" id="IPR001303">
    <property type="entry name" value="Aldolase_II/adducin_N"/>
</dbReference>
<dbReference type="InterPro" id="IPR036409">
    <property type="entry name" value="Aldolase_II/adducin_N_sf"/>
</dbReference>
<dbReference type="InterPro" id="IPR017714">
    <property type="entry name" value="MethylthioRu-1-P_deHdtase_MtnB"/>
</dbReference>
<dbReference type="NCBIfam" id="NF005244">
    <property type="entry name" value="PRK06754.1"/>
    <property type="match status" value="1"/>
</dbReference>
<dbReference type="NCBIfam" id="TIGR03328">
    <property type="entry name" value="salvage_mtnB"/>
    <property type="match status" value="1"/>
</dbReference>
<dbReference type="PANTHER" id="PTHR10640">
    <property type="entry name" value="METHYLTHIORIBULOSE-1-PHOSPHATE DEHYDRATASE"/>
    <property type="match status" value="1"/>
</dbReference>
<dbReference type="PANTHER" id="PTHR10640:SF7">
    <property type="entry name" value="METHYLTHIORIBULOSE-1-PHOSPHATE DEHYDRATASE"/>
    <property type="match status" value="1"/>
</dbReference>
<dbReference type="Pfam" id="PF00596">
    <property type="entry name" value="Aldolase_II"/>
    <property type="match status" value="1"/>
</dbReference>
<dbReference type="SMART" id="SM01007">
    <property type="entry name" value="Aldolase_II"/>
    <property type="match status" value="1"/>
</dbReference>
<dbReference type="SUPFAM" id="SSF53639">
    <property type="entry name" value="AraD/HMP-PK domain-like"/>
    <property type="match status" value="1"/>
</dbReference>
<reference key="1">
    <citation type="journal article" date="2007" name="Proc. Natl. Acad. Sci. U.S.A.">
        <title>Genome and proteome of long-chain alkane degrading Geobacillus thermodenitrificans NG80-2 isolated from a deep-subsurface oil reservoir.</title>
        <authorList>
            <person name="Feng L."/>
            <person name="Wang W."/>
            <person name="Cheng J."/>
            <person name="Ren Y."/>
            <person name="Zhao G."/>
            <person name="Gao C."/>
            <person name="Tang Y."/>
            <person name="Liu X."/>
            <person name="Han W."/>
            <person name="Peng X."/>
            <person name="Liu R."/>
            <person name="Wang L."/>
        </authorList>
    </citation>
    <scope>NUCLEOTIDE SEQUENCE [LARGE SCALE GENOMIC DNA]</scope>
    <source>
        <strain>NG80-2</strain>
    </source>
</reference>
<comment type="function">
    <text evidence="1">Catalyzes the dehydration of methylthioribulose-1-phosphate (MTRu-1-P) into 2,3-diketo-5-methylthiopentyl-1-phosphate (DK-MTP-1-P).</text>
</comment>
<comment type="catalytic activity">
    <reaction evidence="1">
        <text>5-(methylsulfanyl)-D-ribulose 1-phosphate = 5-methylsulfanyl-2,3-dioxopentyl phosphate + H2O</text>
        <dbReference type="Rhea" id="RHEA:15549"/>
        <dbReference type="ChEBI" id="CHEBI:15377"/>
        <dbReference type="ChEBI" id="CHEBI:58548"/>
        <dbReference type="ChEBI" id="CHEBI:58828"/>
        <dbReference type="EC" id="4.2.1.109"/>
    </reaction>
</comment>
<comment type="cofactor">
    <cofactor evidence="1">
        <name>Zn(2+)</name>
        <dbReference type="ChEBI" id="CHEBI:29105"/>
    </cofactor>
    <text evidence="1">Binds 1 zinc ion per subunit.</text>
</comment>
<comment type="pathway">
    <text evidence="1">Amino-acid biosynthesis; L-methionine biosynthesis via salvage pathway; L-methionine from S-methyl-5-thio-alpha-D-ribose 1-phosphate: step 2/6.</text>
</comment>
<comment type="subunit">
    <text evidence="1">Homotetramer.</text>
</comment>
<comment type="similarity">
    <text evidence="1">Belongs to the aldolase class II family. MtnB subfamily.</text>
</comment>
<name>MTNB_GEOTN</name>